<proteinExistence type="inferred from homology"/>
<dbReference type="EMBL" id="CP000141">
    <property type="protein sequence ID" value="ABB15011.1"/>
    <property type="molecule type" value="Genomic_DNA"/>
</dbReference>
<dbReference type="RefSeq" id="WP_011342949.1">
    <property type="nucleotide sequence ID" value="NC_007503.1"/>
</dbReference>
<dbReference type="SMR" id="Q3AG61"/>
<dbReference type="FunCoup" id="Q3AG61">
    <property type="interactions" value="240"/>
</dbReference>
<dbReference type="STRING" id="246194.CHY_0001"/>
<dbReference type="KEGG" id="chy:CHY_0001"/>
<dbReference type="eggNOG" id="COG0230">
    <property type="taxonomic scope" value="Bacteria"/>
</dbReference>
<dbReference type="HOGENOM" id="CLU_129938_2_0_9"/>
<dbReference type="InParanoid" id="Q3AG61"/>
<dbReference type="OrthoDB" id="9804164at2"/>
<dbReference type="Proteomes" id="UP000002706">
    <property type="component" value="Chromosome"/>
</dbReference>
<dbReference type="GO" id="GO:1990904">
    <property type="term" value="C:ribonucleoprotein complex"/>
    <property type="evidence" value="ECO:0007669"/>
    <property type="project" value="UniProtKB-KW"/>
</dbReference>
<dbReference type="GO" id="GO:0005840">
    <property type="term" value="C:ribosome"/>
    <property type="evidence" value="ECO:0007669"/>
    <property type="project" value="UniProtKB-KW"/>
</dbReference>
<dbReference type="GO" id="GO:0003735">
    <property type="term" value="F:structural constituent of ribosome"/>
    <property type="evidence" value="ECO:0007669"/>
    <property type="project" value="InterPro"/>
</dbReference>
<dbReference type="GO" id="GO:0006412">
    <property type="term" value="P:translation"/>
    <property type="evidence" value="ECO:0007669"/>
    <property type="project" value="UniProtKB-UniRule"/>
</dbReference>
<dbReference type="FunFam" id="1.10.287.3980:FF:000001">
    <property type="entry name" value="Mitochondrial ribosomal protein L34"/>
    <property type="match status" value="1"/>
</dbReference>
<dbReference type="Gene3D" id="1.10.287.3980">
    <property type="match status" value="1"/>
</dbReference>
<dbReference type="HAMAP" id="MF_00391">
    <property type="entry name" value="Ribosomal_bL34"/>
    <property type="match status" value="1"/>
</dbReference>
<dbReference type="InterPro" id="IPR000271">
    <property type="entry name" value="Ribosomal_bL34"/>
</dbReference>
<dbReference type="InterPro" id="IPR020939">
    <property type="entry name" value="Ribosomal_bL34_CS"/>
</dbReference>
<dbReference type="NCBIfam" id="TIGR01030">
    <property type="entry name" value="rpmH_bact"/>
    <property type="match status" value="1"/>
</dbReference>
<dbReference type="PANTHER" id="PTHR14503:SF4">
    <property type="entry name" value="LARGE RIBOSOMAL SUBUNIT PROTEIN BL34M"/>
    <property type="match status" value="1"/>
</dbReference>
<dbReference type="PANTHER" id="PTHR14503">
    <property type="entry name" value="MITOCHONDRIAL RIBOSOMAL PROTEIN 34 FAMILY MEMBER"/>
    <property type="match status" value="1"/>
</dbReference>
<dbReference type="Pfam" id="PF00468">
    <property type="entry name" value="Ribosomal_L34"/>
    <property type="match status" value="1"/>
</dbReference>
<dbReference type="PROSITE" id="PS00784">
    <property type="entry name" value="RIBOSOMAL_L34"/>
    <property type="match status" value="1"/>
</dbReference>
<feature type="chain" id="PRO_1000013311" description="Large ribosomal subunit protein bL34">
    <location>
        <begin position="1"/>
        <end position="44"/>
    </location>
</feature>
<feature type="region of interest" description="Disordered" evidence="2">
    <location>
        <begin position="1"/>
        <end position="44"/>
    </location>
</feature>
<feature type="compositionally biased region" description="Basic residues" evidence="2">
    <location>
        <begin position="1"/>
        <end position="23"/>
    </location>
</feature>
<feature type="compositionally biased region" description="Basic residues" evidence="2">
    <location>
        <begin position="30"/>
        <end position="44"/>
    </location>
</feature>
<keyword id="KW-1185">Reference proteome</keyword>
<keyword id="KW-0687">Ribonucleoprotein</keyword>
<keyword id="KW-0689">Ribosomal protein</keyword>
<accession>Q3AG61</accession>
<comment type="similarity">
    <text evidence="1">Belongs to the bacterial ribosomal protein bL34 family.</text>
</comment>
<organism>
    <name type="scientific">Carboxydothermus hydrogenoformans (strain ATCC BAA-161 / DSM 6008 / Z-2901)</name>
    <dbReference type="NCBI Taxonomy" id="246194"/>
    <lineage>
        <taxon>Bacteria</taxon>
        <taxon>Bacillati</taxon>
        <taxon>Bacillota</taxon>
        <taxon>Clostridia</taxon>
        <taxon>Thermoanaerobacterales</taxon>
        <taxon>Thermoanaerobacteraceae</taxon>
        <taxon>Carboxydothermus</taxon>
    </lineage>
</organism>
<name>RL34_CARHZ</name>
<reference key="1">
    <citation type="journal article" date="2005" name="PLoS Genet.">
        <title>Life in hot carbon monoxide: the complete genome sequence of Carboxydothermus hydrogenoformans Z-2901.</title>
        <authorList>
            <person name="Wu M."/>
            <person name="Ren Q."/>
            <person name="Durkin A.S."/>
            <person name="Daugherty S.C."/>
            <person name="Brinkac L.M."/>
            <person name="Dodson R.J."/>
            <person name="Madupu R."/>
            <person name="Sullivan S.A."/>
            <person name="Kolonay J.F."/>
            <person name="Nelson W.C."/>
            <person name="Tallon L.J."/>
            <person name="Jones K.M."/>
            <person name="Ulrich L.E."/>
            <person name="Gonzalez J.M."/>
            <person name="Zhulin I.B."/>
            <person name="Robb F.T."/>
            <person name="Eisen J.A."/>
        </authorList>
    </citation>
    <scope>NUCLEOTIDE SEQUENCE [LARGE SCALE GENOMIC DNA]</scope>
    <source>
        <strain>ATCC BAA-161 / DSM 6008 / Z-2901</strain>
    </source>
</reference>
<protein>
    <recommendedName>
        <fullName evidence="1">Large ribosomal subunit protein bL34</fullName>
    </recommendedName>
    <alternativeName>
        <fullName evidence="3">50S ribosomal protein L34</fullName>
    </alternativeName>
</protein>
<evidence type="ECO:0000255" key="1">
    <source>
        <dbReference type="HAMAP-Rule" id="MF_00391"/>
    </source>
</evidence>
<evidence type="ECO:0000256" key="2">
    <source>
        <dbReference type="SAM" id="MobiDB-lite"/>
    </source>
</evidence>
<evidence type="ECO:0000305" key="3"/>
<sequence>MKRTYQPKNRRRKRVHGFLKRMRTPGGRNVIKRRRLKGRKRLTA</sequence>
<gene>
    <name evidence="1" type="primary">rpmH</name>
    <name type="ordered locus">CHY_0001</name>
</gene>